<organism>
    <name type="scientific">Prochlorococcus marinus (strain MIT 9313)</name>
    <dbReference type="NCBI Taxonomy" id="74547"/>
    <lineage>
        <taxon>Bacteria</taxon>
        <taxon>Bacillati</taxon>
        <taxon>Cyanobacteriota</taxon>
        <taxon>Cyanophyceae</taxon>
        <taxon>Synechococcales</taxon>
        <taxon>Prochlorococcaceae</taxon>
        <taxon>Prochlorococcus</taxon>
    </lineage>
</organism>
<reference key="1">
    <citation type="journal article" date="2003" name="Nature">
        <title>Genome divergence in two Prochlorococcus ecotypes reflects oceanic niche differentiation.</title>
        <authorList>
            <person name="Rocap G."/>
            <person name="Larimer F.W."/>
            <person name="Lamerdin J.E."/>
            <person name="Malfatti S."/>
            <person name="Chain P."/>
            <person name="Ahlgren N.A."/>
            <person name="Arellano A."/>
            <person name="Coleman M."/>
            <person name="Hauser L."/>
            <person name="Hess W.R."/>
            <person name="Johnson Z.I."/>
            <person name="Land M.L."/>
            <person name="Lindell D."/>
            <person name="Post A.F."/>
            <person name="Regala W."/>
            <person name="Shah M."/>
            <person name="Shaw S.L."/>
            <person name="Steglich C."/>
            <person name="Sullivan M.B."/>
            <person name="Ting C.S."/>
            <person name="Tolonen A."/>
            <person name="Webb E.A."/>
            <person name="Zinser E.R."/>
            <person name="Chisholm S.W."/>
        </authorList>
    </citation>
    <scope>NUCLEOTIDE SEQUENCE [LARGE SCALE GENOMIC DNA]</scope>
    <source>
        <strain>MIT 9313</strain>
    </source>
</reference>
<comment type="function">
    <text evidence="1">The RuvA-RuvB-RuvC complex processes Holliday junction (HJ) DNA during genetic recombination and DNA repair, while the RuvA-RuvB complex plays an important role in the rescue of blocked DNA replication forks via replication fork reversal (RFR). RuvA specifically binds to HJ cruciform DNA, conferring on it an open structure. The RuvB hexamer acts as an ATP-dependent pump, pulling dsDNA into and through the RuvAB complex. RuvB forms 2 homohexamers on either side of HJ DNA bound by 1 or 2 RuvA tetramers; 4 subunits per hexamer contact DNA at a time. Coordinated motions by a converter formed by DNA-disengaged RuvB subunits stimulates ATP hydrolysis and nucleotide exchange. Immobilization of the converter enables RuvB to convert the ATP-contained energy into a lever motion, pulling 2 nucleotides of DNA out of the RuvA tetramer per ATP hydrolyzed, thus driving DNA branch migration. The RuvB motors rotate together with the DNA substrate, which together with the progressing nucleotide cycle form the mechanistic basis for DNA recombination by continuous HJ branch migration. Branch migration allows RuvC to scan DNA until it finds its consensus sequence, where it cleaves and resolves cruciform DNA.</text>
</comment>
<comment type="catalytic activity">
    <reaction evidence="1">
        <text>ATP + H2O = ADP + phosphate + H(+)</text>
        <dbReference type="Rhea" id="RHEA:13065"/>
        <dbReference type="ChEBI" id="CHEBI:15377"/>
        <dbReference type="ChEBI" id="CHEBI:15378"/>
        <dbReference type="ChEBI" id="CHEBI:30616"/>
        <dbReference type="ChEBI" id="CHEBI:43474"/>
        <dbReference type="ChEBI" id="CHEBI:456216"/>
    </reaction>
</comment>
<comment type="subunit">
    <text evidence="1">Homohexamer. Forms an RuvA(8)-RuvB(12)-Holliday junction (HJ) complex. HJ DNA is sandwiched between 2 RuvA tetramers; dsDNA enters through RuvA and exits via RuvB. An RuvB hexamer assembles on each DNA strand where it exits the tetramer. Each RuvB hexamer is contacted by two RuvA subunits (via domain III) on 2 adjacent RuvB subunits; this complex drives branch migration. In the full resolvosome a probable DNA-RuvA(4)-RuvB(12)-RuvC(2) complex forms which resolves the HJ.</text>
</comment>
<comment type="subcellular location">
    <subcellularLocation>
        <location evidence="1">Cytoplasm</location>
    </subcellularLocation>
</comment>
<comment type="domain">
    <text evidence="1">Has 3 domains, the large (RuvB-L) and small ATPase (RuvB-S) domains and the C-terminal head (RuvB-H) domain. The head domain binds DNA, while the ATPase domains jointly bind ATP, ADP or are empty depending on the state of the subunit in the translocation cycle. During a single DNA translocation step the structure of each domain remains the same, but their relative positions change.</text>
</comment>
<comment type="similarity">
    <text evidence="1">Belongs to the RuvB family.</text>
</comment>
<proteinExistence type="inferred from homology"/>
<name>RUVB_PROMM</name>
<evidence type="ECO:0000255" key="1">
    <source>
        <dbReference type="HAMAP-Rule" id="MF_00016"/>
    </source>
</evidence>
<evidence type="ECO:0000256" key="2">
    <source>
        <dbReference type="SAM" id="MobiDB-lite"/>
    </source>
</evidence>
<sequence>MAIVSSSAGRADSQPPAAKSRVVDASPLPEEASPAREDGLRPRRLEDYIGQRELKQVLAIAVKAAMGRGDALDHVLLYGPPGLGKTTMAMVLAEELGVKCRVTSAPALERPRDIVGLLVNLQPREVLFIDEIHRLTRVAEELLYPAMEDRRLDLTVGKGSTARTRALELPPFTLVGATTRAGALSSPLRDRFGLIQRLEFYGLEDLQAIVERAAGLLRLQLTAQACQEIARRCRGTPRIANRLLRRVRDVASVCGGESLIDAALVDEALTLHRVDARGLDASDRRLLDLLLESHGGGPVGLETLAAALGEDPATLEAVVEPFLLQLGFLQRTPRGRVVTGAGRRHLGWPELP</sequence>
<keyword id="KW-0067">ATP-binding</keyword>
<keyword id="KW-0963">Cytoplasm</keyword>
<keyword id="KW-0227">DNA damage</keyword>
<keyword id="KW-0233">DNA recombination</keyword>
<keyword id="KW-0234">DNA repair</keyword>
<keyword id="KW-0238">DNA-binding</keyword>
<keyword id="KW-0378">Hydrolase</keyword>
<keyword id="KW-0547">Nucleotide-binding</keyword>
<keyword id="KW-1185">Reference proteome</keyword>
<dbReference type="EC" id="3.6.4.-" evidence="1"/>
<dbReference type="EMBL" id="BX548175">
    <property type="protein sequence ID" value="CAE20331.1"/>
    <property type="molecule type" value="Genomic_DNA"/>
</dbReference>
<dbReference type="RefSeq" id="WP_011129534.1">
    <property type="nucleotide sequence ID" value="NC_005071.1"/>
</dbReference>
<dbReference type="SMR" id="Q7V910"/>
<dbReference type="KEGG" id="pmt:PMT_0156"/>
<dbReference type="eggNOG" id="COG2255">
    <property type="taxonomic scope" value="Bacteria"/>
</dbReference>
<dbReference type="HOGENOM" id="CLU_055599_1_0_3"/>
<dbReference type="OrthoDB" id="9804478at2"/>
<dbReference type="Proteomes" id="UP000001423">
    <property type="component" value="Chromosome"/>
</dbReference>
<dbReference type="GO" id="GO:0005737">
    <property type="term" value="C:cytoplasm"/>
    <property type="evidence" value="ECO:0007669"/>
    <property type="project" value="UniProtKB-SubCell"/>
</dbReference>
<dbReference type="GO" id="GO:0048476">
    <property type="term" value="C:Holliday junction resolvase complex"/>
    <property type="evidence" value="ECO:0007669"/>
    <property type="project" value="UniProtKB-UniRule"/>
</dbReference>
<dbReference type="GO" id="GO:0005524">
    <property type="term" value="F:ATP binding"/>
    <property type="evidence" value="ECO:0007669"/>
    <property type="project" value="UniProtKB-UniRule"/>
</dbReference>
<dbReference type="GO" id="GO:0016887">
    <property type="term" value="F:ATP hydrolysis activity"/>
    <property type="evidence" value="ECO:0007669"/>
    <property type="project" value="InterPro"/>
</dbReference>
<dbReference type="GO" id="GO:0000400">
    <property type="term" value="F:four-way junction DNA binding"/>
    <property type="evidence" value="ECO:0007669"/>
    <property type="project" value="UniProtKB-UniRule"/>
</dbReference>
<dbReference type="GO" id="GO:0009378">
    <property type="term" value="F:four-way junction helicase activity"/>
    <property type="evidence" value="ECO:0007669"/>
    <property type="project" value="InterPro"/>
</dbReference>
<dbReference type="GO" id="GO:0006310">
    <property type="term" value="P:DNA recombination"/>
    <property type="evidence" value="ECO:0007669"/>
    <property type="project" value="UniProtKB-UniRule"/>
</dbReference>
<dbReference type="GO" id="GO:0006281">
    <property type="term" value="P:DNA repair"/>
    <property type="evidence" value="ECO:0007669"/>
    <property type="project" value="UniProtKB-UniRule"/>
</dbReference>
<dbReference type="CDD" id="cd00009">
    <property type="entry name" value="AAA"/>
    <property type="match status" value="1"/>
</dbReference>
<dbReference type="Gene3D" id="1.10.8.60">
    <property type="match status" value="1"/>
</dbReference>
<dbReference type="Gene3D" id="3.40.50.300">
    <property type="entry name" value="P-loop containing nucleotide triphosphate hydrolases"/>
    <property type="match status" value="1"/>
</dbReference>
<dbReference type="Gene3D" id="1.10.10.10">
    <property type="entry name" value="Winged helix-like DNA-binding domain superfamily/Winged helix DNA-binding domain"/>
    <property type="match status" value="1"/>
</dbReference>
<dbReference type="HAMAP" id="MF_00016">
    <property type="entry name" value="DNA_HJ_migration_RuvB"/>
    <property type="match status" value="1"/>
</dbReference>
<dbReference type="InterPro" id="IPR003593">
    <property type="entry name" value="AAA+_ATPase"/>
</dbReference>
<dbReference type="InterPro" id="IPR041445">
    <property type="entry name" value="AAA_lid_4"/>
</dbReference>
<dbReference type="InterPro" id="IPR004605">
    <property type="entry name" value="DNA_helicase_Holl-junc_RuvB"/>
</dbReference>
<dbReference type="InterPro" id="IPR027417">
    <property type="entry name" value="P-loop_NTPase"/>
</dbReference>
<dbReference type="InterPro" id="IPR008824">
    <property type="entry name" value="RuvB-like_N"/>
</dbReference>
<dbReference type="InterPro" id="IPR008823">
    <property type="entry name" value="RuvB_C"/>
</dbReference>
<dbReference type="InterPro" id="IPR036388">
    <property type="entry name" value="WH-like_DNA-bd_sf"/>
</dbReference>
<dbReference type="InterPro" id="IPR036390">
    <property type="entry name" value="WH_DNA-bd_sf"/>
</dbReference>
<dbReference type="NCBIfam" id="NF000868">
    <property type="entry name" value="PRK00080.1"/>
    <property type="match status" value="1"/>
</dbReference>
<dbReference type="NCBIfam" id="TIGR00635">
    <property type="entry name" value="ruvB"/>
    <property type="match status" value="1"/>
</dbReference>
<dbReference type="PANTHER" id="PTHR42848">
    <property type="match status" value="1"/>
</dbReference>
<dbReference type="PANTHER" id="PTHR42848:SF1">
    <property type="entry name" value="HOLLIDAY JUNCTION BRANCH MIGRATION COMPLEX SUBUNIT RUVB"/>
    <property type="match status" value="1"/>
</dbReference>
<dbReference type="Pfam" id="PF17864">
    <property type="entry name" value="AAA_lid_4"/>
    <property type="match status" value="1"/>
</dbReference>
<dbReference type="Pfam" id="PF05491">
    <property type="entry name" value="RuvB_C"/>
    <property type="match status" value="1"/>
</dbReference>
<dbReference type="Pfam" id="PF05496">
    <property type="entry name" value="RuvB_N"/>
    <property type="match status" value="1"/>
</dbReference>
<dbReference type="SMART" id="SM00382">
    <property type="entry name" value="AAA"/>
    <property type="match status" value="1"/>
</dbReference>
<dbReference type="SUPFAM" id="SSF52540">
    <property type="entry name" value="P-loop containing nucleoside triphosphate hydrolases"/>
    <property type="match status" value="1"/>
</dbReference>
<dbReference type="SUPFAM" id="SSF46785">
    <property type="entry name" value="Winged helix' DNA-binding domain"/>
    <property type="match status" value="1"/>
</dbReference>
<protein>
    <recommendedName>
        <fullName evidence="1">Holliday junction branch migration complex subunit RuvB</fullName>
        <ecNumber evidence="1">3.6.4.-</ecNumber>
    </recommendedName>
</protein>
<accession>Q7V910</accession>
<gene>
    <name evidence="1" type="primary">ruvB</name>
    <name type="ordered locus">PMT_0156</name>
</gene>
<feature type="chain" id="PRO_0000165576" description="Holliday junction branch migration complex subunit RuvB">
    <location>
        <begin position="1"/>
        <end position="352"/>
    </location>
</feature>
<feature type="region of interest" description="Disordered" evidence="2">
    <location>
        <begin position="1"/>
        <end position="42"/>
    </location>
</feature>
<feature type="region of interest" description="Large ATPase domain (RuvB-L)" evidence="1">
    <location>
        <begin position="13"/>
        <end position="201"/>
    </location>
</feature>
<feature type="region of interest" description="Small ATPAse domain (RuvB-S)" evidence="1">
    <location>
        <begin position="202"/>
        <end position="273"/>
    </location>
</feature>
<feature type="region of interest" description="Head domain (RuvB-H)" evidence="1">
    <location>
        <begin position="276"/>
        <end position="352"/>
    </location>
</feature>
<feature type="compositionally biased region" description="Basic and acidic residues" evidence="2">
    <location>
        <begin position="33"/>
        <end position="42"/>
    </location>
</feature>
<feature type="binding site" evidence="1">
    <location>
        <position position="40"/>
    </location>
    <ligand>
        <name>ATP</name>
        <dbReference type="ChEBI" id="CHEBI:30616"/>
    </ligand>
</feature>
<feature type="binding site" evidence="1">
    <location>
        <position position="41"/>
    </location>
    <ligand>
        <name>ATP</name>
        <dbReference type="ChEBI" id="CHEBI:30616"/>
    </ligand>
</feature>
<feature type="binding site" evidence="1">
    <location>
        <position position="82"/>
    </location>
    <ligand>
        <name>ATP</name>
        <dbReference type="ChEBI" id="CHEBI:30616"/>
    </ligand>
</feature>
<feature type="binding site" evidence="1">
    <location>
        <position position="85"/>
    </location>
    <ligand>
        <name>ATP</name>
        <dbReference type="ChEBI" id="CHEBI:30616"/>
    </ligand>
</feature>
<feature type="binding site" evidence="1">
    <location>
        <position position="86"/>
    </location>
    <ligand>
        <name>ATP</name>
        <dbReference type="ChEBI" id="CHEBI:30616"/>
    </ligand>
</feature>
<feature type="binding site" evidence="1">
    <location>
        <position position="86"/>
    </location>
    <ligand>
        <name>Mg(2+)</name>
        <dbReference type="ChEBI" id="CHEBI:18420"/>
    </ligand>
</feature>
<feature type="binding site" evidence="1">
    <location>
        <position position="87"/>
    </location>
    <ligand>
        <name>ATP</name>
        <dbReference type="ChEBI" id="CHEBI:30616"/>
    </ligand>
</feature>
<feature type="binding site" evidence="1">
    <location>
        <position position="191"/>
    </location>
    <ligand>
        <name>ATP</name>
        <dbReference type="ChEBI" id="CHEBI:30616"/>
    </ligand>
</feature>
<feature type="binding site" evidence="1">
    <location>
        <position position="201"/>
    </location>
    <ligand>
        <name>ATP</name>
        <dbReference type="ChEBI" id="CHEBI:30616"/>
    </ligand>
</feature>
<feature type="binding site" evidence="1">
    <location>
        <position position="238"/>
    </location>
    <ligand>
        <name>ATP</name>
        <dbReference type="ChEBI" id="CHEBI:30616"/>
    </ligand>
</feature>
<feature type="binding site" evidence="1">
    <location>
        <position position="331"/>
    </location>
    <ligand>
        <name>DNA</name>
        <dbReference type="ChEBI" id="CHEBI:16991"/>
    </ligand>
</feature>
<feature type="binding site" evidence="1">
    <location>
        <position position="336"/>
    </location>
    <ligand>
        <name>DNA</name>
        <dbReference type="ChEBI" id="CHEBI:16991"/>
    </ligand>
</feature>